<dbReference type="EC" id="2.1.3.-" evidence="1"/>
<dbReference type="EMBL" id="AE017340">
    <property type="protein sequence ID" value="AAV81931.1"/>
    <property type="molecule type" value="Genomic_DNA"/>
</dbReference>
<dbReference type="RefSeq" id="WP_011234342.1">
    <property type="nucleotide sequence ID" value="NC_006512.1"/>
</dbReference>
<dbReference type="SMR" id="Q5R0Q6"/>
<dbReference type="STRING" id="283942.IL1091"/>
<dbReference type="GeneID" id="41336259"/>
<dbReference type="KEGG" id="ilo:IL1091"/>
<dbReference type="eggNOG" id="COG2226">
    <property type="taxonomic scope" value="Bacteria"/>
</dbReference>
<dbReference type="HOGENOM" id="CLU_078475_0_0_6"/>
<dbReference type="OrthoDB" id="9779941at2"/>
<dbReference type="Proteomes" id="UP000001171">
    <property type="component" value="Chromosome"/>
</dbReference>
<dbReference type="GO" id="GO:0016743">
    <property type="term" value="F:carboxyl- or carbamoyltransferase activity"/>
    <property type="evidence" value="ECO:0007669"/>
    <property type="project" value="UniProtKB-UniRule"/>
</dbReference>
<dbReference type="GO" id="GO:1904047">
    <property type="term" value="F:S-adenosyl-L-methionine binding"/>
    <property type="evidence" value="ECO:0007669"/>
    <property type="project" value="UniProtKB-UniRule"/>
</dbReference>
<dbReference type="GO" id="GO:0002098">
    <property type="term" value="P:tRNA wobble uridine modification"/>
    <property type="evidence" value="ECO:0007669"/>
    <property type="project" value="InterPro"/>
</dbReference>
<dbReference type="CDD" id="cd02440">
    <property type="entry name" value="AdoMet_MTases"/>
    <property type="match status" value="1"/>
</dbReference>
<dbReference type="Gene3D" id="3.40.50.150">
    <property type="entry name" value="Vaccinia Virus protein VP39"/>
    <property type="match status" value="1"/>
</dbReference>
<dbReference type="HAMAP" id="MF_01589">
    <property type="entry name" value="Cx_SAM_synthase"/>
    <property type="match status" value="1"/>
</dbReference>
<dbReference type="InterPro" id="IPR005271">
    <property type="entry name" value="CmoA"/>
</dbReference>
<dbReference type="InterPro" id="IPR041698">
    <property type="entry name" value="Methyltransf_25"/>
</dbReference>
<dbReference type="InterPro" id="IPR029063">
    <property type="entry name" value="SAM-dependent_MTases_sf"/>
</dbReference>
<dbReference type="NCBIfam" id="TIGR00740">
    <property type="entry name" value="carboxy-S-adenosyl-L-methionine synthase CmoA"/>
    <property type="match status" value="1"/>
</dbReference>
<dbReference type="NCBIfam" id="NF011995">
    <property type="entry name" value="PRK15451.1"/>
    <property type="match status" value="1"/>
</dbReference>
<dbReference type="PANTHER" id="PTHR43861:SF2">
    <property type="entry name" value="CARBOXY-S-ADENOSYL-L-METHIONINE SYNTHASE"/>
    <property type="match status" value="1"/>
</dbReference>
<dbReference type="PANTHER" id="PTHR43861">
    <property type="entry name" value="TRANS-ACONITATE 2-METHYLTRANSFERASE-RELATED"/>
    <property type="match status" value="1"/>
</dbReference>
<dbReference type="Pfam" id="PF13649">
    <property type="entry name" value="Methyltransf_25"/>
    <property type="match status" value="1"/>
</dbReference>
<dbReference type="PIRSF" id="PIRSF006325">
    <property type="entry name" value="MeTrfase_bac"/>
    <property type="match status" value="1"/>
</dbReference>
<dbReference type="SUPFAM" id="SSF53335">
    <property type="entry name" value="S-adenosyl-L-methionine-dependent methyltransferases"/>
    <property type="match status" value="1"/>
</dbReference>
<gene>
    <name evidence="1" type="primary">cmoA</name>
    <name type="ordered locus">IL1091</name>
</gene>
<keyword id="KW-1185">Reference proteome</keyword>
<keyword id="KW-0949">S-adenosyl-L-methionine</keyword>
<keyword id="KW-0808">Transferase</keyword>
<protein>
    <recommendedName>
        <fullName evidence="1">Carboxy-S-adenosyl-L-methionine synthase</fullName>
        <shortName evidence="1">Cx-SAM synthase</shortName>
        <ecNumber evidence="1">2.1.3.-</ecNumber>
    </recommendedName>
</protein>
<feature type="chain" id="PRO_0000314343" description="Carboxy-S-adenosyl-L-methionine synthase">
    <location>
        <begin position="1"/>
        <end position="243"/>
    </location>
</feature>
<feature type="binding site" evidence="1">
    <location>
        <position position="39"/>
    </location>
    <ligand>
        <name>S-adenosyl-L-methionine</name>
        <dbReference type="ChEBI" id="CHEBI:59789"/>
    </ligand>
</feature>
<feature type="binding site" evidence="1">
    <location>
        <begin position="64"/>
        <end position="66"/>
    </location>
    <ligand>
        <name>S-adenosyl-L-methionine</name>
        <dbReference type="ChEBI" id="CHEBI:59789"/>
    </ligand>
</feature>
<feature type="binding site" evidence="1">
    <location>
        <begin position="90"/>
        <end position="91"/>
    </location>
    <ligand>
        <name>S-adenosyl-L-methionine</name>
        <dbReference type="ChEBI" id="CHEBI:59789"/>
    </ligand>
</feature>
<feature type="binding site" evidence="1">
    <location>
        <begin position="118"/>
        <end position="119"/>
    </location>
    <ligand>
        <name>S-adenosyl-L-methionine</name>
        <dbReference type="ChEBI" id="CHEBI:59789"/>
    </ligand>
</feature>
<feature type="binding site" evidence="1">
    <location>
        <position position="133"/>
    </location>
    <ligand>
        <name>S-adenosyl-L-methionine</name>
        <dbReference type="ChEBI" id="CHEBI:59789"/>
    </ligand>
</feature>
<feature type="binding site" evidence="1">
    <location>
        <position position="200"/>
    </location>
    <ligand>
        <name>S-adenosyl-L-methionine</name>
        <dbReference type="ChEBI" id="CHEBI:59789"/>
    </ligand>
</feature>
<proteinExistence type="inferred from homology"/>
<sequence length="243" mass="27466">MTQHDTIFSKPLPSISDFCFDQQVVEVFPDMINRSVPGYSSILQTLPQIVSRYVQPNSHLYDLGCSLGAATLAIRKGCEQTENCKIIGIDNSQPMIERAQLHLDGFKSQIPVELHCQDLAETEIKNASVVVLNFTLQFISQDKRDEVIQNIFNGMNKGGALLVAEKVRHPDESMNDLLIELHHNFKRANGYSELEISQKRAAIENVMKVDTLQAHQQRFQKAGFQHSSVWFQCFNFAAMLAVK</sequence>
<reference key="1">
    <citation type="journal article" date="2004" name="Proc. Natl. Acad. Sci. U.S.A.">
        <title>Genome sequence of the deep-sea gamma-proteobacterium Idiomarina loihiensis reveals amino acid fermentation as a source of carbon and energy.</title>
        <authorList>
            <person name="Hou S."/>
            <person name="Saw J.H."/>
            <person name="Lee K.S."/>
            <person name="Freitas T.A."/>
            <person name="Belisle C."/>
            <person name="Kawarabayasi Y."/>
            <person name="Donachie S.P."/>
            <person name="Pikina A."/>
            <person name="Galperin M.Y."/>
            <person name="Koonin E.V."/>
            <person name="Makarova K.S."/>
            <person name="Omelchenko M.V."/>
            <person name="Sorokin A."/>
            <person name="Wolf Y.I."/>
            <person name="Li Q.X."/>
            <person name="Keum Y.S."/>
            <person name="Campbell S."/>
            <person name="Denery J."/>
            <person name="Aizawa S."/>
            <person name="Shibata S."/>
            <person name="Malahoff A."/>
            <person name="Alam M."/>
        </authorList>
    </citation>
    <scope>NUCLEOTIDE SEQUENCE [LARGE SCALE GENOMIC DNA]</scope>
    <source>
        <strain>ATCC BAA-735 / DSM 15497 / L2-TR</strain>
    </source>
</reference>
<name>CMOA_IDILO</name>
<accession>Q5R0Q6</accession>
<organism>
    <name type="scientific">Idiomarina loihiensis (strain ATCC BAA-735 / DSM 15497 / L2-TR)</name>
    <dbReference type="NCBI Taxonomy" id="283942"/>
    <lineage>
        <taxon>Bacteria</taxon>
        <taxon>Pseudomonadati</taxon>
        <taxon>Pseudomonadota</taxon>
        <taxon>Gammaproteobacteria</taxon>
        <taxon>Alteromonadales</taxon>
        <taxon>Idiomarinaceae</taxon>
        <taxon>Idiomarina</taxon>
    </lineage>
</organism>
<evidence type="ECO:0000255" key="1">
    <source>
        <dbReference type="HAMAP-Rule" id="MF_01589"/>
    </source>
</evidence>
<comment type="function">
    <text evidence="1">Catalyzes the conversion of S-adenosyl-L-methionine (SAM) to carboxy-S-adenosyl-L-methionine (Cx-SAM).</text>
</comment>
<comment type="catalytic activity">
    <reaction evidence="1">
        <text>prephenate + S-adenosyl-L-methionine = carboxy-S-adenosyl-L-methionine + 3-phenylpyruvate + H2O</text>
        <dbReference type="Rhea" id="RHEA:51692"/>
        <dbReference type="ChEBI" id="CHEBI:15377"/>
        <dbReference type="ChEBI" id="CHEBI:18005"/>
        <dbReference type="ChEBI" id="CHEBI:29934"/>
        <dbReference type="ChEBI" id="CHEBI:59789"/>
        <dbReference type="ChEBI" id="CHEBI:134278"/>
    </reaction>
</comment>
<comment type="subunit">
    <text evidence="1">Homodimer.</text>
</comment>
<comment type="similarity">
    <text evidence="1">Belongs to the class I-like SAM-binding methyltransferase superfamily. Cx-SAM synthase family.</text>
</comment>